<organism>
    <name type="scientific">Dioscorea elephantipes</name>
    <name type="common">Elephant's foot yam</name>
    <name type="synonym">Testudinaria elephantipes</name>
    <dbReference type="NCBI Taxonomy" id="145284"/>
    <lineage>
        <taxon>Eukaryota</taxon>
        <taxon>Viridiplantae</taxon>
        <taxon>Streptophyta</taxon>
        <taxon>Embryophyta</taxon>
        <taxon>Tracheophyta</taxon>
        <taxon>Spermatophyta</taxon>
        <taxon>Magnoliopsida</taxon>
        <taxon>Liliopsida</taxon>
        <taxon>Dioscoreales</taxon>
        <taxon>Dioscoreaceae</taxon>
        <taxon>Dioscorea</taxon>
    </lineage>
</organism>
<proteinExistence type="inferred from homology"/>
<name>PETG_DIOEL</name>
<geneLocation type="chloroplast"/>
<gene>
    <name evidence="1" type="primary">petG</name>
</gene>
<protein>
    <recommendedName>
        <fullName evidence="1">Cytochrome b6-f complex subunit 5</fullName>
    </recommendedName>
    <alternativeName>
        <fullName evidence="1">Cytochrome b6-f complex subunit PetG</fullName>
    </alternativeName>
    <alternativeName>
        <fullName evidence="1">Cytochrome b6-f complex subunit V</fullName>
    </alternativeName>
</protein>
<comment type="function">
    <text evidence="1">Component of the cytochrome b6-f complex, which mediates electron transfer between photosystem II (PSII) and photosystem I (PSI), cyclic electron flow around PSI, and state transitions. PetG is required for either the stability or assembly of the cytochrome b6-f complex.</text>
</comment>
<comment type="subunit">
    <text evidence="1">The 4 large subunits of the cytochrome b6-f complex are cytochrome b6, subunit IV (17 kDa polypeptide, PetD), cytochrome f and the Rieske protein, while the 4 small subunits are PetG, PetL, PetM and PetN. The complex functions as a dimer.</text>
</comment>
<comment type="subcellular location">
    <subcellularLocation>
        <location evidence="1">Plastid</location>
        <location evidence="1">Chloroplast thylakoid membrane</location>
        <topology evidence="1">Single-pass membrane protein</topology>
    </subcellularLocation>
</comment>
<comment type="similarity">
    <text evidence="1">Belongs to the PetG family.</text>
</comment>
<reference key="1">
    <citation type="journal article" date="2007" name="Mol. Phylogenet. Evol.">
        <title>Phylogenetic and evolutionary implications of complete chloroplast genome sequences of four early-diverging angiosperms: Buxus (Buxaceae), Chloranthus (Chloranthaceae), Dioscorea (Dioscoreaceae), and Illicium (Schisandraceae).</title>
        <authorList>
            <person name="Hansen D.R."/>
            <person name="Dastidar S.G."/>
            <person name="Cai Z."/>
            <person name="Penaflor C."/>
            <person name="Kuehl J.V."/>
            <person name="Boore J.L."/>
            <person name="Jansen R.K."/>
        </authorList>
    </citation>
    <scope>NUCLEOTIDE SEQUENCE [LARGE SCALE GENOMIC DNA]</scope>
</reference>
<sequence length="37" mass="4170">MIEVFLFGIVLGLIPITLAGLFVTAYLQYRRGDQLDL</sequence>
<feature type="chain" id="PRO_0000355385" description="Cytochrome b6-f complex subunit 5">
    <location>
        <begin position="1"/>
        <end position="37"/>
    </location>
</feature>
<feature type="transmembrane region" description="Helical" evidence="1">
    <location>
        <begin position="5"/>
        <end position="25"/>
    </location>
</feature>
<evidence type="ECO:0000255" key="1">
    <source>
        <dbReference type="HAMAP-Rule" id="MF_00432"/>
    </source>
</evidence>
<accession>A6MMM6</accession>
<keyword id="KW-0150">Chloroplast</keyword>
<keyword id="KW-0249">Electron transport</keyword>
<keyword id="KW-0472">Membrane</keyword>
<keyword id="KW-0602">Photosynthesis</keyword>
<keyword id="KW-0934">Plastid</keyword>
<keyword id="KW-0793">Thylakoid</keyword>
<keyword id="KW-0812">Transmembrane</keyword>
<keyword id="KW-1133">Transmembrane helix</keyword>
<keyword id="KW-0813">Transport</keyword>
<dbReference type="EMBL" id="EF380353">
    <property type="protein sequence ID" value="ABR01449.1"/>
    <property type="molecule type" value="Genomic_DNA"/>
</dbReference>
<dbReference type="RefSeq" id="YP_001294371.1">
    <property type="nucleotide sequence ID" value="NC_009601.1"/>
</dbReference>
<dbReference type="SMR" id="A6MMM6"/>
<dbReference type="GeneID" id="5236571"/>
<dbReference type="GO" id="GO:0009535">
    <property type="term" value="C:chloroplast thylakoid membrane"/>
    <property type="evidence" value="ECO:0007669"/>
    <property type="project" value="UniProtKB-SubCell"/>
</dbReference>
<dbReference type="GO" id="GO:0009512">
    <property type="term" value="C:cytochrome b6f complex"/>
    <property type="evidence" value="ECO:0007669"/>
    <property type="project" value="InterPro"/>
</dbReference>
<dbReference type="GO" id="GO:0045158">
    <property type="term" value="F:electron transporter, transferring electrons within cytochrome b6/f complex of photosystem II activity"/>
    <property type="evidence" value="ECO:0007669"/>
    <property type="project" value="UniProtKB-UniRule"/>
</dbReference>
<dbReference type="GO" id="GO:0017004">
    <property type="term" value="P:cytochrome complex assembly"/>
    <property type="evidence" value="ECO:0007669"/>
    <property type="project" value="UniProtKB-UniRule"/>
</dbReference>
<dbReference type="GO" id="GO:0015979">
    <property type="term" value="P:photosynthesis"/>
    <property type="evidence" value="ECO:0007669"/>
    <property type="project" value="UniProtKB-KW"/>
</dbReference>
<dbReference type="HAMAP" id="MF_00432">
    <property type="entry name" value="Cytb6_f_PetG"/>
    <property type="match status" value="1"/>
</dbReference>
<dbReference type="InterPro" id="IPR003683">
    <property type="entry name" value="Cyt_6/f_cplx_su5"/>
</dbReference>
<dbReference type="InterPro" id="IPR036099">
    <property type="entry name" value="Cyt_6/f_cplx_su5_sf"/>
</dbReference>
<dbReference type="NCBIfam" id="NF001907">
    <property type="entry name" value="PRK00665.1"/>
    <property type="match status" value="1"/>
</dbReference>
<dbReference type="Pfam" id="PF02529">
    <property type="entry name" value="PetG"/>
    <property type="match status" value="1"/>
</dbReference>
<dbReference type="PIRSF" id="PIRSF000034">
    <property type="entry name" value="Cyt_b6-f_V"/>
    <property type="match status" value="1"/>
</dbReference>
<dbReference type="SUPFAM" id="SSF103446">
    <property type="entry name" value="PetG subunit of the cytochrome b6f complex"/>
    <property type="match status" value="1"/>
</dbReference>